<evidence type="ECO:0000255" key="1">
    <source>
        <dbReference type="HAMAP-Rule" id="MF_00226"/>
    </source>
</evidence>
<feature type="chain" id="PRO_1000058746" description="CinA-like protein">
    <location>
        <begin position="1"/>
        <end position="425"/>
    </location>
</feature>
<proteinExistence type="inferred from homology"/>
<reference key="1">
    <citation type="journal article" date="2015" name="Proc. Natl. Acad. Sci. U.S.A.">
        <title>Trichodesmium genome maintains abundant, widespread noncoding DNA in situ, despite oligotrophic lifestyle.</title>
        <authorList>
            <person name="Walworth N."/>
            <person name="Pfreundt U."/>
            <person name="Nelson W.C."/>
            <person name="Mincer T."/>
            <person name="Heidelberg J.F."/>
            <person name="Fu F."/>
            <person name="Waterbury J.B."/>
            <person name="Glavina del Rio T."/>
            <person name="Goodwin L."/>
            <person name="Kyrpides N.C."/>
            <person name="Land M.L."/>
            <person name="Woyke T."/>
            <person name="Hutchins D.A."/>
            <person name="Hess W.R."/>
            <person name="Webb E.A."/>
        </authorList>
    </citation>
    <scope>NUCLEOTIDE SEQUENCE [LARGE SCALE GENOMIC DNA]</scope>
    <source>
        <strain>IMS101</strain>
    </source>
</reference>
<gene>
    <name type="ordered locus">Tery_2662</name>
</gene>
<organism>
    <name type="scientific">Trichodesmium erythraeum (strain IMS101)</name>
    <dbReference type="NCBI Taxonomy" id="203124"/>
    <lineage>
        <taxon>Bacteria</taxon>
        <taxon>Bacillati</taxon>
        <taxon>Cyanobacteriota</taxon>
        <taxon>Cyanophyceae</taxon>
        <taxon>Oscillatoriophycideae</taxon>
        <taxon>Oscillatoriales</taxon>
        <taxon>Microcoleaceae</taxon>
        <taxon>Trichodesmium</taxon>
    </lineage>
</organism>
<sequence length="425" mass="46526">MIAEIICVGTELLLGDILNSNAQFLAKQLANLGIAHYYQTVVGDNPDRIKQVLAIATDRSQILIFTGGLGPTPDDLTVATIADFFETPLIERPEIIEDITKKFARRGRIMTASNRKQALIPQGANILPNPIGTAPGIIWQPVQNITIMTFPGVPTEMKSMWQETAIPYMQSQGWCEQTIYSRTLKFWGITESSLAEKVAPFLEKENPTVAPYANYGEVKLRISARATSLELANKLIIPVEEEIKDIAGIDFYGINDESLASVVGKLLLESGETLAVAESCTGGSLGSMLTSIPGSSEYFYGGVISYENQVKITLLDVNLEDLMAEGSVSHVVAKQMASGVVKKLGTNWGISITGIAGPGGGSDTKPVGLVYIGIARYDDIVESFEYRFSNLRDRNWIRRVSVSTALDLLRRKLYLSKQRPQHHQA</sequence>
<name>CINAL_TRIEI</name>
<comment type="similarity">
    <text evidence="1">Belongs to the CinA family.</text>
</comment>
<accession>Q111G9</accession>
<protein>
    <recommendedName>
        <fullName evidence="1">CinA-like protein</fullName>
    </recommendedName>
</protein>
<dbReference type="EMBL" id="CP000393">
    <property type="protein sequence ID" value="ABG51855.1"/>
    <property type="molecule type" value="Genomic_DNA"/>
</dbReference>
<dbReference type="RefSeq" id="WP_011612217.1">
    <property type="nucleotide sequence ID" value="NC_008312.1"/>
</dbReference>
<dbReference type="SMR" id="Q111G9"/>
<dbReference type="STRING" id="203124.Tery_2662"/>
<dbReference type="KEGG" id="ter:Tery_2662"/>
<dbReference type="eggNOG" id="COG1058">
    <property type="taxonomic scope" value="Bacteria"/>
</dbReference>
<dbReference type="eggNOG" id="COG1546">
    <property type="taxonomic scope" value="Bacteria"/>
</dbReference>
<dbReference type="HOGENOM" id="CLU_030805_9_3_3"/>
<dbReference type="OrthoDB" id="9801454at2"/>
<dbReference type="CDD" id="cd00885">
    <property type="entry name" value="cinA"/>
    <property type="match status" value="1"/>
</dbReference>
<dbReference type="Gene3D" id="3.30.70.2860">
    <property type="match status" value="1"/>
</dbReference>
<dbReference type="Gene3D" id="3.90.950.20">
    <property type="entry name" value="CinA-like"/>
    <property type="match status" value="1"/>
</dbReference>
<dbReference type="Gene3D" id="3.40.980.10">
    <property type="entry name" value="MoaB/Mog-like domain"/>
    <property type="match status" value="1"/>
</dbReference>
<dbReference type="HAMAP" id="MF_00226_B">
    <property type="entry name" value="CinA_B"/>
    <property type="match status" value="1"/>
</dbReference>
<dbReference type="InterPro" id="IPR050101">
    <property type="entry name" value="CinA"/>
</dbReference>
<dbReference type="InterPro" id="IPR036653">
    <property type="entry name" value="CinA-like_C"/>
</dbReference>
<dbReference type="InterPro" id="IPR008136">
    <property type="entry name" value="CinA_C"/>
</dbReference>
<dbReference type="InterPro" id="IPR041424">
    <property type="entry name" value="CinA_KH"/>
</dbReference>
<dbReference type="InterPro" id="IPR008135">
    <property type="entry name" value="Competence-induced_CinA"/>
</dbReference>
<dbReference type="InterPro" id="IPR036425">
    <property type="entry name" value="MoaB/Mog-like_dom_sf"/>
</dbReference>
<dbReference type="InterPro" id="IPR001453">
    <property type="entry name" value="MoaB/Mog_dom"/>
</dbReference>
<dbReference type="NCBIfam" id="TIGR00200">
    <property type="entry name" value="cinA_nterm"/>
    <property type="match status" value="1"/>
</dbReference>
<dbReference type="NCBIfam" id="TIGR00177">
    <property type="entry name" value="molyb_syn"/>
    <property type="match status" value="1"/>
</dbReference>
<dbReference type="NCBIfam" id="TIGR00199">
    <property type="entry name" value="PncC_domain"/>
    <property type="match status" value="1"/>
</dbReference>
<dbReference type="NCBIfam" id="NF001813">
    <property type="entry name" value="PRK00549.1"/>
    <property type="match status" value="1"/>
</dbReference>
<dbReference type="PANTHER" id="PTHR13939">
    <property type="entry name" value="NICOTINAMIDE-NUCLEOTIDE AMIDOHYDROLASE PNCC"/>
    <property type="match status" value="1"/>
</dbReference>
<dbReference type="PANTHER" id="PTHR13939:SF0">
    <property type="entry name" value="NMN AMIDOHYDROLASE-LIKE PROTEIN YFAY"/>
    <property type="match status" value="1"/>
</dbReference>
<dbReference type="Pfam" id="PF02464">
    <property type="entry name" value="CinA"/>
    <property type="match status" value="1"/>
</dbReference>
<dbReference type="Pfam" id="PF18146">
    <property type="entry name" value="CinA_KH"/>
    <property type="match status" value="1"/>
</dbReference>
<dbReference type="Pfam" id="PF00994">
    <property type="entry name" value="MoCF_biosynth"/>
    <property type="match status" value="1"/>
</dbReference>
<dbReference type="PIRSF" id="PIRSF006728">
    <property type="entry name" value="CinA"/>
    <property type="match status" value="1"/>
</dbReference>
<dbReference type="SMART" id="SM00852">
    <property type="entry name" value="MoCF_biosynth"/>
    <property type="match status" value="1"/>
</dbReference>
<dbReference type="SUPFAM" id="SSF142433">
    <property type="entry name" value="CinA-like"/>
    <property type="match status" value="1"/>
</dbReference>
<dbReference type="SUPFAM" id="SSF53218">
    <property type="entry name" value="Molybdenum cofactor biosynthesis proteins"/>
    <property type="match status" value="1"/>
</dbReference>